<protein>
    <recommendedName>
        <fullName>Trans-1,2-dihydrobenzene-1,2-diol dehydrogenase</fullName>
        <ecNumber>1.3.1.20</ecNumber>
    </recommendedName>
    <alternativeName>
        <fullName>D-xylose 1-dehydrogenase</fullName>
    </alternativeName>
    <alternativeName>
        <fullName>D-xylose-NADP dehydrogenase</fullName>
        <ecNumber>1.1.1.179</ecNumber>
    </alternativeName>
    <alternativeName>
        <fullName>Dimeric dihydrodiol dehydrogenase</fullName>
    </alternativeName>
</protein>
<name>DHDH_MOUSE</name>
<organism>
    <name type="scientific">Mus musculus</name>
    <name type="common">Mouse</name>
    <dbReference type="NCBI Taxonomy" id="10090"/>
    <lineage>
        <taxon>Eukaryota</taxon>
        <taxon>Metazoa</taxon>
        <taxon>Chordata</taxon>
        <taxon>Craniata</taxon>
        <taxon>Vertebrata</taxon>
        <taxon>Euteleostomi</taxon>
        <taxon>Mammalia</taxon>
        <taxon>Eutheria</taxon>
        <taxon>Euarchontoglires</taxon>
        <taxon>Glires</taxon>
        <taxon>Rodentia</taxon>
        <taxon>Myomorpha</taxon>
        <taxon>Muroidea</taxon>
        <taxon>Muridae</taxon>
        <taxon>Murinae</taxon>
        <taxon>Mus</taxon>
        <taxon>Mus</taxon>
    </lineage>
</organism>
<proteinExistence type="evidence at protein level"/>
<feature type="chain" id="PRO_0000315364" description="Trans-1,2-dihydrobenzene-1,2-diol dehydrogenase">
    <location>
        <begin position="1"/>
        <end position="333"/>
    </location>
</feature>
<feature type="site" description="May play an important role in coenzyme binding" evidence="1">
    <location>
        <position position="71"/>
    </location>
</feature>
<feature type="site" description="May play an important role in coenzyme binding" evidence="1">
    <location>
        <position position="79"/>
    </location>
</feature>
<feature type="site" description="May play an important role in coenzyme binding" evidence="1">
    <location>
        <position position="97"/>
    </location>
</feature>
<feature type="site" description="May play an important role for the adaptation of the alcohol substrate into the binding site" evidence="1">
    <location>
        <position position="176"/>
    </location>
</feature>
<feature type="site" description="May play an important role in catalytic activity" evidence="1">
    <location>
        <position position="180"/>
    </location>
</feature>
<feature type="sequence conflict" description="In Ref. 2; AAI16415." evidence="2" ref="2">
    <original>S</original>
    <variation>F</variation>
    <location>
        <position position="115"/>
    </location>
</feature>
<sequence length="333" mass="36301">MALRWGIVSAGLIANDFTTVLSSLPSSEHQVVAVAARDLNRAEEFAQKFNIPKAYGSYEELAKDPNVEVAYIATQHPQHKPAVLLCLAAGKAVLCEKPMGVNAAEVREMVAKARSQGVFLMEAIWSRFFPAMEALREVLVQGTIGDLRVARAEFGFDLSHIPRATDWNQAGGGLLDLGIYCVQFLSMIFGAQKPEKISAVGRIHETGVDDTVSVLLQYPGGVHGSFTCSISSNLPNTAYVSGTKGMAQIQKLWAPTELVVNGERKEFPPPVLGKDYNFVNGSCMLYEANHVRECLRKGLKESPVVPLAESELLAEILEEARKAIGVTFPQDKR</sequence>
<reference key="1">
    <citation type="journal article" date="2005" name="Science">
        <title>The transcriptional landscape of the mammalian genome.</title>
        <authorList>
            <person name="Carninci P."/>
            <person name="Kasukawa T."/>
            <person name="Katayama S."/>
            <person name="Gough J."/>
            <person name="Frith M.C."/>
            <person name="Maeda N."/>
            <person name="Oyama R."/>
            <person name="Ravasi T."/>
            <person name="Lenhard B."/>
            <person name="Wells C."/>
            <person name="Kodzius R."/>
            <person name="Shimokawa K."/>
            <person name="Bajic V.B."/>
            <person name="Brenner S.E."/>
            <person name="Batalov S."/>
            <person name="Forrest A.R."/>
            <person name="Zavolan M."/>
            <person name="Davis M.J."/>
            <person name="Wilming L.G."/>
            <person name="Aidinis V."/>
            <person name="Allen J.E."/>
            <person name="Ambesi-Impiombato A."/>
            <person name="Apweiler R."/>
            <person name="Aturaliya R.N."/>
            <person name="Bailey T.L."/>
            <person name="Bansal M."/>
            <person name="Baxter L."/>
            <person name="Beisel K.W."/>
            <person name="Bersano T."/>
            <person name="Bono H."/>
            <person name="Chalk A.M."/>
            <person name="Chiu K.P."/>
            <person name="Choudhary V."/>
            <person name="Christoffels A."/>
            <person name="Clutterbuck D.R."/>
            <person name="Crowe M.L."/>
            <person name="Dalla E."/>
            <person name="Dalrymple B.P."/>
            <person name="de Bono B."/>
            <person name="Della Gatta G."/>
            <person name="di Bernardo D."/>
            <person name="Down T."/>
            <person name="Engstrom P."/>
            <person name="Fagiolini M."/>
            <person name="Faulkner G."/>
            <person name="Fletcher C.F."/>
            <person name="Fukushima T."/>
            <person name="Furuno M."/>
            <person name="Futaki S."/>
            <person name="Gariboldi M."/>
            <person name="Georgii-Hemming P."/>
            <person name="Gingeras T.R."/>
            <person name="Gojobori T."/>
            <person name="Green R.E."/>
            <person name="Gustincich S."/>
            <person name="Harbers M."/>
            <person name="Hayashi Y."/>
            <person name="Hensch T.K."/>
            <person name="Hirokawa N."/>
            <person name="Hill D."/>
            <person name="Huminiecki L."/>
            <person name="Iacono M."/>
            <person name="Ikeo K."/>
            <person name="Iwama A."/>
            <person name="Ishikawa T."/>
            <person name="Jakt M."/>
            <person name="Kanapin A."/>
            <person name="Katoh M."/>
            <person name="Kawasawa Y."/>
            <person name="Kelso J."/>
            <person name="Kitamura H."/>
            <person name="Kitano H."/>
            <person name="Kollias G."/>
            <person name="Krishnan S.P."/>
            <person name="Kruger A."/>
            <person name="Kummerfeld S.K."/>
            <person name="Kurochkin I.V."/>
            <person name="Lareau L.F."/>
            <person name="Lazarevic D."/>
            <person name="Lipovich L."/>
            <person name="Liu J."/>
            <person name="Liuni S."/>
            <person name="McWilliam S."/>
            <person name="Madan Babu M."/>
            <person name="Madera M."/>
            <person name="Marchionni L."/>
            <person name="Matsuda H."/>
            <person name="Matsuzawa S."/>
            <person name="Miki H."/>
            <person name="Mignone F."/>
            <person name="Miyake S."/>
            <person name="Morris K."/>
            <person name="Mottagui-Tabar S."/>
            <person name="Mulder N."/>
            <person name="Nakano N."/>
            <person name="Nakauchi H."/>
            <person name="Ng P."/>
            <person name="Nilsson R."/>
            <person name="Nishiguchi S."/>
            <person name="Nishikawa S."/>
            <person name="Nori F."/>
            <person name="Ohara O."/>
            <person name="Okazaki Y."/>
            <person name="Orlando V."/>
            <person name="Pang K.C."/>
            <person name="Pavan W.J."/>
            <person name="Pavesi G."/>
            <person name="Pesole G."/>
            <person name="Petrovsky N."/>
            <person name="Piazza S."/>
            <person name="Reed J."/>
            <person name="Reid J.F."/>
            <person name="Ring B.Z."/>
            <person name="Ringwald M."/>
            <person name="Rost B."/>
            <person name="Ruan Y."/>
            <person name="Salzberg S.L."/>
            <person name="Sandelin A."/>
            <person name="Schneider C."/>
            <person name="Schoenbach C."/>
            <person name="Sekiguchi K."/>
            <person name="Semple C.A."/>
            <person name="Seno S."/>
            <person name="Sessa L."/>
            <person name="Sheng Y."/>
            <person name="Shibata Y."/>
            <person name="Shimada H."/>
            <person name="Shimada K."/>
            <person name="Silva D."/>
            <person name="Sinclair B."/>
            <person name="Sperling S."/>
            <person name="Stupka E."/>
            <person name="Sugiura K."/>
            <person name="Sultana R."/>
            <person name="Takenaka Y."/>
            <person name="Taki K."/>
            <person name="Tammoja K."/>
            <person name="Tan S.L."/>
            <person name="Tang S."/>
            <person name="Taylor M.S."/>
            <person name="Tegner J."/>
            <person name="Teichmann S.A."/>
            <person name="Ueda H.R."/>
            <person name="van Nimwegen E."/>
            <person name="Verardo R."/>
            <person name="Wei C.L."/>
            <person name="Yagi K."/>
            <person name="Yamanishi H."/>
            <person name="Zabarovsky E."/>
            <person name="Zhu S."/>
            <person name="Zimmer A."/>
            <person name="Hide W."/>
            <person name="Bult C."/>
            <person name="Grimmond S.M."/>
            <person name="Teasdale R.D."/>
            <person name="Liu E.T."/>
            <person name="Brusic V."/>
            <person name="Quackenbush J."/>
            <person name="Wahlestedt C."/>
            <person name="Mattick J.S."/>
            <person name="Hume D.A."/>
            <person name="Kai C."/>
            <person name="Sasaki D."/>
            <person name="Tomaru Y."/>
            <person name="Fukuda S."/>
            <person name="Kanamori-Katayama M."/>
            <person name="Suzuki M."/>
            <person name="Aoki J."/>
            <person name="Arakawa T."/>
            <person name="Iida J."/>
            <person name="Imamura K."/>
            <person name="Itoh M."/>
            <person name="Kato T."/>
            <person name="Kawaji H."/>
            <person name="Kawagashira N."/>
            <person name="Kawashima T."/>
            <person name="Kojima M."/>
            <person name="Kondo S."/>
            <person name="Konno H."/>
            <person name="Nakano K."/>
            <person name="Ninomiya N."/>
            <person name="Nishio T."/>
            <person name="Okada M."/>
            <person name="Plessy C."/>
            <person name="Shibata K."/>
            <person name="Shiraki T."/>
            <person name="Suzuki S."/>
            <person name="Tagami M."/>
            <person name="Waki K."/>
            <person name="Watahiki A."/>
            <person name="Okamura-Oho Y."/>
            <person name="Suzuki H."/>
            <person name="Kawai J."/>
            <person name="Hayashizaki Y."/>
        </authorList>
    </citation>
    <scope>NUCLEOTIDE SEQUENCE [LARGE SCALE MRNA]</scope>
    <source>
        <strain>C57BL/6J</strain>
        <strain>NOD</strain>
        <tissue>Liver</tissue>
    </source>
</reference>
<reference key="2">
    <citation type="journal article" date="2004" name="Genome Res.">
        <title>The status, quality, and expansion of the NIH full-length cDNA project: the Mammalian Gene Collection (MGC).</title>
        <authorList>
            <consortium name="The MGC Project Team"/>
        </authorList>
    </citation>
    <scope>NUCLEOTIDE SEQUENCE [LARGE SCALE MRNA]</scope>
</reference>
<reference key="3">
    <citation type="journal article" date="2010" name="Cell">
        <title>A tissue-specific atlas of mouse protein phosphorylation and expression.</title>
        <authorList>
            <person name="Huttlin E.L."/>
            <person name="Jedrychowski M.P."/>
            <person name="Elias J.E."/>
            <person name="Goswami T."/>
            <person name="Rad R."/>
            <person name="Beausoleil S.A."/>
            <person name="Villen J."/>
            <person name="Haas W."/>
            <person name="Sowa M.E."/>
            <person name="Gygi S.P."/>
        </authorList>
    </citation>
    <scope>IDENTIFICATION BY MASS SPECTROMETRY [LARGE SCALE ANALYSIS]</scope>
    <source>
        <tissue>Brown adipose tissue</tissue>
        <tissue>Heart</tissue>
        <tissue>Liver</tissue>
    </source>
</reference>
<keyword id="KW-0521">NADP</keyword>
<keyword id="KW-0560">Oxidoreductase</keyword>
<keyword id="KW-1185">Reference proteome</keyword>
<gene>
    <name type="primary">Dhdh</name>
</gene>
<accession>Q9DBB8</accession>
<accession>Q14B09</accession>
<evidence type="ECO:0000250" key="1"/>
<evidence type="ECO:0000305" key="2"/>
<dbReference type="EC" id="1.3.1.20"/>
<dbReference type="EC" id="1.1.1.179"/>
<dbReference type="EMBL" id="AK005050">
    <property type="protein sequence ID" value="BAB23776.1"/>
    <property type="molecule type" value="mRNA"/>
</dbReference>
<dbReference type="EMBL" id="AK154452">
    <property type="protein sequence ID" value="BAE32596.1"/>
    <property type="molecule type" value="mRNA"/>
</dbReference>
<dbReference type="EMBL" id="BC116414">
    <property type="protein sequence ID" value="AAI16415.1"/>
    <property type="molecule type" value="mRNA"/>
</dbReference>
<dbReference type="CCDS" id="CCDS21247.1"/>
<dbReference type="RefSeq" id="NP_082179.1">
    <property type="nucleotide sequence ID" value="NM_027903.4"/>
</dbReference>
<dbReference type="SMR" id="Q9DBB8"/>
<dbReference type="FunCoup" id="Q9DBB8">
    <property type="interactions" value="396"/>
</dbReference>
<dbReference type="STRING" id="10090.ENSMUSP00000011526"/>
<dbReference type="iPTMnet" id="Q9DBB8"/>
<dbReference type="PhosphoSitePlus" id="Q9DBB8"/>
<dbReference type="SwissPalm" id="Q9DBB8"/>
<dbReference type="jPOST" id="Q9DBB8"/>
<dbReference type="PaxDb" id="10090-ENSMUSP00000011526"/>
<dbReference type="ProteomicsDB" id="279646"/>
<dbReference type="DNASU" id="71755"/>
<dbReference type="Ensembl" id="ENSMUST00000011526.7">
    <property type="protein sequence ID" value="ENSMUSP00000011526.5"/>
    <property type="gene ID" value="ENSMUSG00000011382.9"/>
</dbReference>
<dbReference type="GeneID" id="71755"/>
<dbReference type="KEGG" id="mmu:71755"/>
<dbReference type="UCSC" id="uc009gvj.1">
    <property type="organism name" value="mouse"/>
</dbReference>
<dbReference type="AGR" id="MGI:1919005"/>
<dbReference type="CTD" id="27294"/>
<dbReference type="MGI" id="MGI:1919005">
    <property type="gene designation" value="Dhdh"/>
</dbReference>
<dbReference type="VEuPathDB" id="HostDB:ENSMUSG00000011382"/>
<dbReference type="eggNOG" id="KOG2741">
    <property type="taxonomic scope" value="Eukaryota"/>
</dbReference>
<dbReference type="GeneTree" id="ENSGT00390000007946"/>
<dbReference type="HOGENOM" id="CLU_023194_7_2_1"/>
<dbReference type="InParanoid" id="Q9DBB8"/>
<dbReference type="OMA" id="AHETGKY"/>
<dbReference type="OrthoDB" id="2129491at2759"/>
<dbReference type="PhylomeDB" id="Q9DBB8"/>
<dbReference type="TreeFam" id="TF324504"/>
<dbReference type="BRENDA" id="1.3.1.20">
    <property type="organism ID" value="3474"/>
</dbReference>
<dbReference type="BioGRID-ORCS" id="71755">
    <property type="hits" value="2 hits in 80 CRISPR screens"/>
</dbReference>
<dbReference type="ChiTaRS" id="Dhdh">
    <property type="organism name" value="mouse"/>
</dbReference>
<dbReference type="PRO" id="PR:Q9DBB8"/>
<dbReference type="Proteomes" id="UP000000589">
    <property type="component" value="Chromosome 7"/>
</dbReference>
<dbReference type="RNAct" id="Q9DBB8">
    <property type="molecule type" value="protein"/>
</dbReference>
<dbReference type="Bgee" id="ENSMUSG00000011382">
    <property type="expression patterns" value="Expressed in hindlimb stylopod muscle and 198 other cell types or tissues"/>
</dbReference>
<dbReference type="GO" id="GO:0047837">
    <property type="term" value="F:D-xylose 1-dehydrogenase (NADP+) activity"/>
    <property type="evidence" value="ECO:0000314"/>
    <property type="project" value="MGI"/>
</dbReference>
<dbReference type="GO" id="GO:0000166">
    <property type="term" value="F:nucleotide binding"/>
    <property type="evidence" value="ECO:0007669"/>
    <property type="project" value="InterPro"/>
</dbReference>
<dbReference type="GO" id="GO:0047115">
    <property type="term" value="F:trans-1,2-dihydrobenzene-1,2-diol dehydrogenase activity"/>
    <property type="evidence" value="ECO:0007669"/>
    <property type="project" value="UniProtKB-EC"/>
</dbReference>
<dbReference type="GO" id="GO:0042843">
    <property type="term" value="P:D-xylose catabolic process"/>
    <property type="evidence" value="ECO:0000314"/>
    <property type="project" value="MGI"/>
</dbReference>
<dbReference type="FunFam" id="3.30.360.10:FF:000031">
    <property type="entry name" value="Trans-1,2-dihydrobenzene-1,2-diol dehydrogenase"/>
    <property type="match status" value="1"/>
</dbReference>
<dbReference type="FunFam" id="3.40.50.720:FF:000269">
    <property type="entry name" value="Trans-1,2-dihydrobenzene-1,2-diol dehydrogenase"/>
    <property type="match status" value="1"/>
</dbReference>
<dbReference type="Gene3D" id="3.30.360.10">
    <property type="entry name" value="Dihydrodipicolinate Reductase, domain 2"/>
    <property type="match status" value="1"/>
</dbReference>
<dbReference type="Gene3D" id="3.40.50.720">
    <property type="entry name" value="NAD(P)-binding Rossmann-like Domain"/>
    <property type="match status" value="1"/>
</dbReference>
<dbReference type="InterPro" id="IPR000683">
    <property type="entry name" value="Gfo/Idh/MocA-like_OxRdtase_N"/>
</dbReference>
<dbReference type="InterPro" id="IPR050984">
    <property type="entry name" value="Gfo/Idh/MocA_domain"/>
</dbReference>
<dbReference type="InterPro" id="IPR055170">
    <property type="entry name" value="GFO_IDH_MocA-like_dom"/>
</dbReference>
<dbReference type="InterPro" id="IPR036291">
    <property type="entry name" value="NAD(P)-bd_dom_sf"/>
</dbReference>
<dbReference type="PANTHER" id="PTHR22604">
    <property type="entry name" value="OXIDOREDUCTASES"/>
    <property type="match status" value="1"/>
</dbReference>
<dbReference type="PANTHER" id="PTHR22604:SF105">
    <property type="entry name" value="TRANS-1,2-DIHYDROBENZENE-1,2-DIOL DEHYDROGENASE"/>
    <property type="match status" value="1"/>
</dbReference>
<dbReference type="Pfam" id="PF01408">
    <property type="entry name" value="GFO_IDH_MocA"/>
    <property type="match status" value="1"/>
</dbReference>
<dbReference type="Pfam" id="PF22725">
    <property type="entry name" value="GFO_IDH_MocA_C3"/>
    <property type="match status" value="1"/>
</dbReference>
<dbReference type="SUPFAM" id="SSF55347">
    <property type="entry name" value="Glyceraldehyde-3-phosphate dehydrogenase-like, C-terminal domain"/>
    <property type="match status" value="1"/>
</dbReference>
<dbReference type="SUPFAM" id="SSF51735">
    <property type="entry name" value="NAD(P)-binding Rossmann-fold domains"/>
    <property type="match status" value="1"/>
</dbReference>
<comment type="catalytic activity">
    <reaction>
        <text>(1R,2R)-1,2-dihydrobenzene-1,2-diol + NADP(+) = catechol + NADPH + H(+)</text>
        <dbReference type="Rhea" id="RHEA:16729"/>
        <dbReference type="ChEBI" id="CHEBI:10702"/>
        <dbReference type="ChEBI" id="CHEBI:15378"/>
        <dbReference type="ChEBI" id="CHEBI:18135"/>
        <dbReference type="ChEBI" id="CHEBI:57783"/>
        <dbReference type="ChEBI" id="CHEBI:58349"/>
        <dbReference type="EC" id="1.3.1.20"/>
    </reaction>
</comment>
<comment type="catalytic activity">
    <reaction>
        <text>D-xylose + NADP(+) = D-xylono-1,5-lactone + NADPH + H(+)</text>
        <dbReference type="Rhea" id="RHEA:22000"/>
        <dbReference type="ChEBI" id="CHEBI:15378"/>
        <dbReference type="ChEBI" id="CHEBI:15867"/>
        <dbReference type="ChEBI" id="CHEBI:53455"/>
        <dbReference type="ChEBI" id="CHEBI:57783"/>
        <dbReference type="ChEBI" id="CHEBI:58349"/>
        <dbReference type="EC" id="1.1.1.179"/>
    </reaction>
</comment>
<comment type="subunit">
    <text evidence="1">Homodimer.</text>
</comment>
<comment type="similarity">
    <text evidence="2">Belongs to the Gfo/Idh/MocA family.</text>
</comment>